<keyword id="KW-0004">4Fe-4S</keyword>
<keyword id="KW-0067">ATP-binding</keyword>
<keyword id="KW-0963">Cytoplasm</keyword>
<keyword id="KW-0408">Iron</keyword>
<keyword id="KW-0411">Iron-sulfur</keyword>
<keyword id="KW-0479">Metal-binding</keyword>
<keyword id="KW-0547">Nucleotide-binding</keyword>
<keyword id="KW-1185">Reference proteome</keyword>
<name>CFD1_NEUCR</name>
<proteinExistence type="inferred from homology"/>
<organism>
    <name type="scientific">Neurospora crassa (strain ATCC 24698 / 74-OR23-1A / CBS 708.71 / DSM 1257 / FGSC 987)</name>
    <dbReference type="NCBI Taxonomy" id="367110"/>
    <lineage>
        <taxon>Eukaryota</taxon>
        <taxon>Fungi</taxon>
        <taxon>Dikarya</taxon>
        <taxon>Ascomycota</taxon>
        <taxon>Pezizomycotina</taxon>
        <taxon>Sordariomycetes</taxon>
        <taxon>Sordariomycetidae</taxon>
        <taxon>Sordariales</taxon>
        <taxon>Sordariaceae</taxon>
        <taxon>Neurospora</taxon>
    </lineage>
</organism>
<protein>
    <recommendedName>
        <fullName evidence="1">Cytosolic Fe-S cluster assembly factor cfd1</fullName>
    </recommendedName>
    <alternativeName>
        <fullName evidence="1">Cytosolic Fe-S cluster-deficient protein 1</fullName>
    </alternativeName>
</protein>
<reference key="1">
    <citation type="journal article" date="2003" name="Nucleic Acids Res.">
        <title>What's in the genome of a filamentous fungus? Analysis of the Neurospora genome sequence.</title>
        <authorList>
            <person name="Mannhaupt G."/>
            <person name="Montrone C."/>
            <person name="Haase D."/>
            <person name="Mewes H.-W."/>
            <person name="Aign V."/>
            <person name="Hoheisel J.D."/>
            <person name="Fartmann B."/>
            <person name="Nyakatura G."/>
            <person name="Kempken F."/>
            <person name="Maier J."/>
            <person name="Schulte U."/>
        </authorList>
    </citation>
    <scope>NUCLEOTIDE SEQUENCE [LARGE SCALE GENOMIC DNA]</scope>
    <source>
        <strain>ATCC 24698 / 74-OR23-1A / CBS 708.71 / DSM 1257 / FGSC 987</strain>
    </source>
</reference>
<reference key="2">
    <citation type="journal article" date="2003" name="Nature">
        <title>The genome sequence of the filamentous fungus Neurospora crassa.</title>
        <authorList>
            <person name="Galagan J.E."/>
            <person name="Calvo S.E."/>
            <person name="Borkovich K.A."/>
            <person name="Selker E.U."/>
            <person name="Read N.D."/>
            <person name="Jaffe D.B."/>
            <person name="FitzHugh W."/>
            <person name="Ma L.-J."/>
            <person name="Smirnov S."/>
            <person name="Purcell S."/>
            <person name="Rehman B."/>
            <person name="Elkins T."/>
            <person name="Engels R."/>
            <person name="Wang S."/>
            <person name="Nielsen C.B."/>
            <person name="Butler J."/>
            <person name="Endrizzi M."/>
            <person name="Qui D."/>
            <person name="Ianakiev P."/>
            <person name="Bell-Pedersen D."/>
            <person name="Nelson M.A."/>
            <person name="Werner-Washburne M."/>
            <person name="Selitrennikoff C.P."/>
            <person name="Kinsey J.A."/>
            <person name="Braun E.L."/>
            <person name="Zelter A."/>
            <person name="Schulte U."/>
            <person name="Kothe G.O."/>
            <person name="Jedd G."/>
            <person name="Mewes H.-W."/>
            <person name="Staben C."/>
            <person name="Marcotte E."/>
            <person name="Greenberg D."/>
            <person name="Roy A."/>
            <person name="Foley K."/>
            <person name="Naylor J."/>
            <person name="Stange-Thomann N."/>
            <person name="Barrett R."/>
            <person name="Gnerre S."/>
            <person name="Kamal M."/>
            <person name="Kamvysselis M."/>
            <person name="Mauceli E.W."/>
            <person name="Bielke C."/>
            <person name="Rudd S."/>
            <person name="Frishman D."/>
            <person name="Krystofova S."/>
            <person name="Rasmussen C."/>
            <person name="Metzenberg R.L."/>
            <person name="Perkins D.D."/>
            <person name="Kroken S."/>
            <person name="Cogoni C."/>
            <person name="Macino G."/>
            <person name="Catcheside D.E.A."/>
            <person name="Li W."/>
            <person name="Pratt R.J."/>
            <person name="Osmani S.A."/>
            <person name="DeSouza C.P.C."/>
            <person name="Glass N.L."/>
            <person name="Orbach M.J."/>
            <person name="Berglund J.A."/>
            <person name="Voelker R."/>
            <person name="Yarden O."/>
            <person name="Plamann M."/>
            <person name="Seiler S."/>
            <person name="Dunlap J.C."/>
            <person name="Radford A."/>
            <person name="Aramayo R."/>
            <person name="Natvig D.O."/>
            <person name="Alex L.A."/>
            <person name="Mannhaupt G."/>
            <person name="Ebbole D.J."/>
            <person name="Freitag M."/>
            <person name="Paulsen I."/>
            <person name="Sachs M.S."/>
            <person name="Lander E.S."/>
            <person name="Nusbaum C."/>
            <person name="Birren B.W."/>
        </authorList>
    </citation>
    <scope>NUCLEOTIDE SEQUENCE [LARGE SCALE GENOMIC DNA]</scope>
    <source>
        <strain>ATCC 24698 / 74-OR23-1A / CBS 708.71 / DSM 1257 / FGSC 987</strain>
    </source>
</reference>
<feature type="chain" id="PRO_0000278881" description="Cytosolic Fe-S cluster assembly factor cfd1">
    <location>
        <begin position="1"/>
        <end position="304"/>
    </location>
</feature>
<feature type="region of interest" description="Disordered" evidence="2">
    <location>
        <begin position="249"/>
        <end position="271"/>
    </location>
</feature>
<feature type="binding site" evidence="1">
    <location>
        <begin position="15"/>
        <end position="22"/>
    </location>
    <ligand>
        <name>ATP</name>
        <dbReference type="ChEBI" id="CHEBI:30616"/>
    </ligand>
</feature>
<feature type="binding site" evidence="1">
    <location>
        <position position="199"/>
    </location>
    <ligand>
        <name>[4Fe-4S] cluster</name>
        <dbReference type="ChEBI" id="CHEBI:49883"/>
        <note>ligand shared between dimeric partners</note>
    </ligand>
</feature>
<feature type="binding site" evidence="1">
    <location>
        <position position="202"/>
    </location>
    <ligand>
        <name>[4Fe-4S] cluster</name>
        <dbReference type="ChEBI" id="CHEBI:49883"/>
        <note>ligand shared between dimeric partners</note>
    </ligand>
</feature>
<dbReference type="EMBL" id="AL670007">
    <property type="protein sequence ID" value="CAD21307.1"/>
    <property type="molecule type" value="Genomic_DNA"/>
</dbReference>
<dbReference type="EMBL" id="CM002240">
    <property type="protein sequence ID" value="EAA32460.1"/>
    <property type="molecule type" value="Genomic_DNA"/>
</dbReference>
<dbReference type="RefSeq" id="XP_961696.1">
    <property type="nucleotide sequence ID" value="XM_956603.2"/>
</dbReference>
<dbReference type="SMR" id="Q8X0F1"/>
<dbReference type="FunCoup" id="Q8X0F1">
    <property type="interactions" value="144"/>
</dbReference>
<dbReference type="STRING" id="367110.Q8X0F1"/>
<dbReference type="PaxDb" id="5141-EFNCRP00000004242"/>
<dbReference type="EnsemblFungi" id="EAA32460">
    <property type="protein sequence ID" value="EAA32460"/>
    <property type="gene ID" value="NCU01084"/>
</dbReference>
<dbReference type="GeneID" id="3877772"/>
<dbReference type="KEGG" id="ncr:NCU01084"/>
<dbReference type="VEuPathDB" id="FungiDB:NCU01084"/>
<dbReference type="HOGENOM" id="CLU_024839_0_1_1"/>
<dbReference type="InParanoid" id="Q8X0F1"/>
<dbReference type="OMA" id="WIPVFAD"/>
<dbReference type="OrthoDB" id="1741334at2759"/>
<dbReference type="Proteomes" id="UP000001805">
    <property type="component" value="Chromosome 2, Linkage Group V"/>
</dbReference>
<dbReference type="GO" id="GO:0005829">
    <property type="term" value="C:cytosol"/>
    <property type="evidence" value="ECO:0000318"/>
    <property type="project" value="GO_Central"/>
</dbReference>
<dbReference type="GO" id="GO:1904564">
    <property type="term" value="C:cytosolic [4Fe-4S] assembly scaffold complex"/>
    <property type="evidence" value="ECO:0007669"/>
    <property type="project" value="EnsemblFungi"/>
</dbReference>
<dbReference type="GO" id="GO:0051539">
    <property type="term" value="F:4 iron, 4 sulfur cluster binding"/>
    <property type="evidence" value="ECO:0007669"/>
    <property type="project" value="UniProtKB-UniRule"/>
</dbReference>
<dbReference type="GO" id="GO:0005524">
    <property type="term" value="F:ATP binding"/>
    <property type="evidence" value="ECO:0007669"/>
    <property type="project" value="UniProtKB-KW"/>
</dbReference>
<dbReference type="GO" id="GO:0016887">
    <property type="term" value="F:ATP hydrolysis activity"/>
    <property type="evidence" value="ECO:0007669"/>
    <property type="project" value="EnsemblFungi"/>
</dbReference>
<dbReference type="GO" id="GO:0140663">
    <property type="term" value="F:ATP-dependent FeS chaperone activity"/>
    <property type="evidence" value="ECO:0007669"/>
    <property type="project" value="InterPro"/>
</dbReference>
<dbReference type="GO" id="GO:0051536">
    <property type="term" value="F:iron-sulfur cluster binding"/>
    <property type="evidence" value="ECO:0000318"/>
    <property type="project" value="GO_Central"/>
</dbReference>
<dbReference type="GO" id="GO:0046872">
    <property type="term" value="F:metal ion binding"/>
    <property type="evidence" value="ECO:0007669"/>
    <property type="project" value="UniProtKB-KW"/>
</dbReference>
<dbReference type="GO" id="GO:0016226">
    <property type="term" value="P:iron-sulfur cluster assembly"/>
    <property type="evidence" value="ECO:0000318"/>
    <property type="project" value="GO_Central"/>
</dbReference>
<dbReference type="GO" id="GO:0002098">
    <property type="term" value="P:tRNA wobble uridine modification"/>
    <property type="evidence" value="ECO:0007669"/>
    <property type="project" value="EnsemblFungi"/>
</dbReference>
<dbReference type="CDD" id="cd02037">
    <property type="entry name" value="Mrp_NBP35"/>
    <property type="match status" value="1"/>
</dbReference>
<dbReference type="FunFam" id="3.40.50.300:FF:001300">
    <property type="entry name" value="Cytosolic Fe-S cluster assembly factor CFD1"/>
    <property type="match status" value="1"/>
</dbReference>
<dbReference type="Gene3D" id="3.40.50.300">
    <property type="entry name" value="P-loop containing nucleotide triphosphate hydrolases"/>
    <property type="match status" value="1"/>
</dbReference>
<dbReference type="HAMAP" id="MF_02040">
    <property type="entry name" value="Mrp_NBP35"/>
    <property type="match status" value="1"/>
</dbReference>
<dbReference type="HAMAP" id="MF_03039">
    <property type="entry name" value="NUBP2"/>
    <property type="match status" value="1"/>
</dbReference>
<dbReference type="InterPro" id="IPR019591">
    <property type="entry name" value="Mrp/NBP35_ATP-bd"/>
</dbReference>
<dbReference type="InterPro" id="IPR028600">
    <property type="entry name" value="NUBP2/Cfd1_eukaryotes"/>
</dbReference>
<dbReference type="InterPro" id="IPR027417">
    <property type="entry name" value="P-loop_NTPase"/>
</dbReference>
<dbReference type="InterPro" id="IPR033756">
    <property type="entry name" value="YlxH/NBP35"/>
</dbReference>
<dbReference type="PANTHER" id="PTHR23264:SF19">
    <property type="entry name" value="CYTOSOLIC FE-S CLUSTER ASSEMBLY FACTOR NUBP2"/>
    <property type="match status" value="1"/>
</dbReference>
<dbReference type="PANTHER" id="PTHR23264">
    <property type="entry name" value="NUCLEOTIDE-BINDING PROTEIN NBP35 YEAST -RELATED"/>
    <property type="match status" value="1"/>
</dbReference>
<dbReference type="Pfam" id="PF10609">
    <property type="entry name" value="ParA"/>
    <property type="match status" value="1"/>
</dbReference>
<dbReference type="SUPFAM" id="SSF52540">
    <property type="entry name" value="P-loop containing nucleoside triphosphate hydrolases"/>
    <property type="match status" value="1"/>
</dbReference>
<gene>
    <name type="primary">cfd1</name>
    <name type="ORF">B14A6.050</name>
    <name type="ORF">NCU01084</name>
</gene>
<accession>Q8X0F1</accession>
<evidence type="ECO:0000255" key="1">
    <source>
        <dbReference type="HAMAP-Rule" id="MF_03039"/>
    </source>
</evidence>
<evidence type="ECO:0000256" key="2">
    <source>
        <dbReference type="SAM" id="MobiDB-lite"/>
    </source>
</evidence>
<sequence>MSLAKVKHIVLVLSGKGGVGKSSVTTQLALSLSLAGHSVGVLDVDLTGPSIPRMFGIEDAKVTQAPGGWLPITVHEADPSAGVGSLRVMSLGFLLPKRGDAVVWRGPKKTAMVRQFLSDVFWDETDYLLIDTPPGTSDEHISLAENLLQKARPGQLAGAVVVTTPQAVATADVRKELNFCTKTNIRVLGVVENMCGFVCPNCSECTNIFMSGGGEVMANDFGVRFLGRVPIDPQFLVLIETGKRPTYPAGTTVDGKDISTPAGASTSEEEEVKDGSRLVHKYKDCSLAPIFSKITADVISAVQQ</sequence>
<comment type="function">
    <text evidence="1">Component of the cytosolic iron-sulfur (Fe/S) protein assembly (CIA) machinery. Required for maturation of extramitochondrial Fe-S proteins. The NBP35-CFD1 heterotetramer forms a Fe-S scaffold complex, mediating the de novo assembly of an Fe-S cluster and its transfer to target apoproteins.</text>
</comment>
<comment type="cofactor">
    <cofactor evidence="1">
        <name>[4Fe-4S] cluster</name>
        <dbReference type="ChEBI" id="CHEBI:49883"/>
    </cofactor>
    <text evidence="1">Binds 4 [4Fe-4S] clusters per heterotetramer. Contains two stable clusters in the N-termini of NBP35 and two labile, bridging clusters between subunits of the NBP35-CFD1 heterotetramer.</text>
</comment>
<comment type="subunit">
    <text evidence="1">Heterotetramer of 2 NBP35 and 2 CFD1 chains.</text>
</comment>
<comment type="subcellular location">
    <subcellularLocation>
        <location evidence="1">Cytoplasm</location>
    </subcellularLocation>
</comment>
<comment type="similarity">
    <text evidence="1">Belongs to the Mrp/NBP35 ATP-binding proteins family. NUBP2/CFD1 subfamily.</text>
</comment>